<organism>
    <name type="scientific">Streptococcus agalactiae serotype III (strain NEM316)</name>
    <dbReference type="NCBI Taxonomy" id="211110"/>
    <lineage>
        <taxon>Bacteria</taxon>
        <taxon>Bacillati</taxon>
        <taxon>Bacillota</taxon>
        <taxon>Bacilli</taxon>
        <taxon>Lactobacillales</taxon>
        <taxon>Streptococcaceae</taxon>
        <taxon>Streptococcus</taxon>
    </lineage>
</organism>
<proteinExistence type="inferred from homology"/>
<evidence type="ECO:0000255" key="1">
    <source>
        <dbReference type="HAMAP-Rule" id="MF_01726"/>
    </source>
</evidence>
<sequence>MTNPIIAFKNVSKVFEDSNTVVLKDINFELEEGKFYTLLGASGSGKSTILNIIAGLLEASTGDIYLDGKRINDVPTNKRDVHTVFQNYALFPHMTVFENVAFPLKLKKMDKKEIQKRVQETLKMVRLEGFEKRAIQKLSGGQRQRVAIARAIINQPKVVLLDEPLSALDLKLRTEMQYELRELQQRLGITFVFVTHDQEEALAMSDWIFVMNEGEIVQSGTPVDIYDEPINHFVATFIGESNILSGKMIEDYLVEFNGKRFEAVDGGMRPNESVQVVIRPEDLQITLPDEGKLQVKVDTQLFRGVHYEIIAYDDLGNEWMIHSTRKAIEGEVIGLDFTPEDIHIMRLNETEEEFDARIEEYVDTDDHEDGLINAIEEERNEENL</sequence>
<feature type="chain" id="PRO_0000286299" description="Spermidine/putrescine import ATP-binding protein PotA">
    <location>
        <begin position="1"/>
        <end position="384"/>
    </location>
</feature>
<feature type="domain" description="ABC transporter" evidence="1">
    <location>
        <begin position="6"/>
        <end position="238"/>
    </location>
</feature>
<feature type="binding site" evidence="1">
    <location>
        <begin position="40"/>
        <end position="47"/>
    </location>
    <ligand>
        <name>ATP</name>
        <dbReference type="ChEBI" id="CHEBI:30616"/>
    </ligand>
</feature>
<name>POTA_STRA3</name>
<keyword id="KW-0067">ATP-binding</keyword>
<keyword id="KW-1003">Cell membrane</keyword>
<keyword id="KW-0472">Membrane</keyword>
<keyword id="KW-0547">Nucleotide-binding</keyword>
<keyword id="KW-1278">Translocase</keyword>
<keyword id="KW-0813">Transport</keyword>
<gene>
    <name evidence="1" type="primary">potA</name>
    <name type="ordered locus">gbs1178</name>
</gene>
<protein>
    <recommendedName>
        <fullName evidence="1">Spermidine/putrescine import ATP-binding protein PotA</fullName>
        <ecNumber evidence="1">7.6.2.11</ecNumber>
    </recommendedName>
</protein>
<accession>Q8E554</accession>
<reference key="1">
    <citation type="journal article" date="2002" name="Mol. Microbiol.">
        <title>Genome sequence of Streptococcus agalactiae, a pathogen causing invasive neonatal disease.</title>
        <authorList>
            <person name="Glaser P."/>
            <person name="Rusniok C."/>
            <person name="Buchrieser C."/>
            <person name="Chevalier F."/>
            <person name="Frangeul L."/>
            <person name="Msadek T."/>
            <person name="Zouine M."/>
            <person name="Couve E."/>
            <person name="Lalioui L."/>
            <person name="Poyart C."/>
            <person name="Trieu-Cuot P."/>
            <person name="Kunst F."/>
        </authorList>
    </citation>
    <scope>NUCLEOTIDE SEQUENCE [LARGE SCALE GENOMIC DNA]</scope>
    <source>
        <strain>NEM316</strain>
    </source>
</reference>
<dbReference type="EC" id="7.6.2.11" evidence="1"/>
<dbReference type="EMBL" id="AL766849">
    <property type="protein sequence ID" value="CAD46837.1"/>
    <property type="molecule type" value="Genomic_DNA"/>
</dbReference>
<dbReference type="RefSeq" id="WP_000184098.1">
    <property type="nucleotide sequence ID" value="NC_004368.1"/>
</dbReference>
<dbReference type="SMR" id="Q8E554"/>
<dbReference type="KEGG" id="san:gbs1178"/>
<dbReference type="eggNOG" id="COG3842">
    <property type="taxonomic scope" value="Bacteria"/>
</dbReference>
<dbReference type="HOGENOM" id="CLU_000604_1_1_9"/>
<dbReference type="Proteomes" id="UP000000823">
    <property type="component" value="Chromosome"/>
</dbReference>
<dbReference type="GO" id="GO:0043190">
    <property type="term" value="C:ATP-binding cassette (ABC) transporter complex"/>
    <property type="evidence" value="ECO:0007669"/>
    <property type="project" value="InterPro"/>
</dbReference>
<dbReference type="GO" id="GO:0015417">
    <property type="term" value="F:ABC-type polyamine transporter activity"/>
    <property type="evidence" value="ECO:0007669"/>
    <property type="project" value="UniProtKB-EC"/>
</dbReference>
<dbReference type="GO" id="GO:0005524">
    <property type="term" value="F:ATP binding"/>
    <property type="evidence" value="ECO:0007669"/>
    <property type="project" value="UniProtKB-KW"/>
</dbReference>
<dbReference type="GO" id="GO:0016887">
    <property type="term" value="F:ATP hydrolysis activity"/>
    <property type="evidence" value="ECO:0007669"/>
    <property type="project" value="InterPro"/>
</dbReference>
<dbReference type="FunFam" id="3.40.50.300:FF:000042">
    <property type="entry name" value="Maltose/maltodextrin ABC transporter, ATP-binding protein"/>
    <property type="match status" value="1"/>
</dbReference>
<dbReference type="Gene3D" id="2.40.50.100">
    <property type="match status" value="1"/>
</dbReference>
<dbReference type="Gene3D" id="3.40.50.300">
    <property type="entry name" value="P-loop containing nucleotide triphosphate hydrolases"/>
    <property type="match status" value="1"/>
</dbReference>
<dbReference type="InterPro" id="IPR003593">
    <property type="entry name" value="AAA+_ATPase"/>
</dbReference>
<dbReference type="InterPro" id="IPR050093">
    <property type="entry name" value="ABC_SmlMolc_Importer"/>
</dbReference>
<dbReference type="InterPro" id="IPR003439">
    <property type="entry name" value="ABC_transporter-like_ATP-bd"/>
</dbReference>
<dbReference type="InterPro" id="IPR017871">
    <property type="entry name" value="ABC_transporter-like_CS"/>
</dbReference>
<dbReference type="InterPro" id="IPR008995">
    <property type="entry name" value="Mo/tungstate-bd_C_term_dom"/>
</dbReference>
<dbReference type="InterPro" id="IPR027417">
    <property type="entry name" value="P-loop_NTPase"/>
</dbReference>
<dbReference type="InterPro" id="IPR005893">
    <property type="entry name" value="PotA-like"/>
</dbReference>
<dbReference type="InterPro" id="IPR013611">
    <property type="entry name" value="Transp-assoc_OB_typ2"/>
</dbReference>
<dbReference type="NCBIfam" id="TIGR01187">
    <property type="entry name" value="potA"/>
    <property type="match status" value="1"/>
</dbReference>
<dbReference type="PANTHER" id="PTHR42781">
    <property type="entry name" value="SPERMIDINE/PUTRESCINE IMPORT ATP-BINDING PROTEIN POTA"/>
    <property type="match status" value="1"/>
</dbReference>
<dbReference type="PANTHER" id="PTHR42781:SF4">
    <property type="entry name" value="SPERMIDINE_PUTRESCINE IMPORT ATP-BINDING PROTEIN POTA"/>
    <property type="match status" value="1"/>
</dbReference>
<dbReference type="Pfam" id="PF00005">
    <property type="entry name" value="ABC_tran"/>
    <property type="match status" value="1"/>
</dbReference>
<dbReference type="Pfam" id="PF08402">
    <property type="entry name" value="TOBE_2"/>
    <property type="match status" value="1"/>
</dbReference>
<dbReference type="SMART" id="SM00382">
    <property type="entry name" value="AAA"/>
    <property type="match status" value="1"/>
</dbReference>
<dbReference type="SUPFAM" id="SSF50331">
    <property type="entry name" value="MOP-like"/>
    <property type="match status" value="1"/>
</dbReference>
<dbReference type="SUPFAM" id="SSF52540">
    <property type="entry name" value="P-loop containing nucleoside triphosphate hydrolases"/>
    <property type="match status" value="1"/>
</dbReference>
<dbReference type="PROSITE" id="PS00211">
    <property type="entry name" value="ABC_TRANSPORTER_1"/>
    <property type="match status" value="1"/>
</dbReference>
<dbReference type="PROSITE" id="PS50893">
    <property type="entry name" value="ABC_TRANSPORTER_2"/>
    <property type="match status" value="1"/>
</dbReference>
<dbReference type="PROSITE" id="PS51305">
    <property type="entry name" value="POTA"/>
    <property type="match status" value="1"/>
</dbReference>
<comment type="function">
    <text evidence="1">Part of the ABC transporter complex PotABCD involved in spermidine/putrescine import. Responsible for energy coupling to the transport system.</text>
</comment>
<comment type="catalytic activity">
    <reaction evidence="1">
        <text>ATP + H2O + polyamine-[polyamine-binding protein]Side 1 = ADP + phosphate + polyamineSide 2 + [polyamine-binding protein]Side 1.</text>
        <dbReference type="EC" id="7.6.2.11"/>
    </reaction>
</comment>
<comment type="subunit">
    <text evidence="1">The complex is composed of two ATP-binding proteins (PotA), two transmembrane proteins (PotB and PotC) and a solute-binding protein (PotD).</text>
</comment>
<comment type="subcellular location">
    <subcellularLocation>
        <location evidence="1">Cell membrane</location>
        <topology evidence="1">Peripheral membrane protein</topology>
    </subcellularLocation>
</comment>
<comment type="similarity">
    <text evidence="1">Belongs to the ABC transporter superfamily. Spermidine/putrescine importer (TC 3.A.1.11.1) family.</text>
</comment>